<name>VF335_IIV6</name>
<keyword id="KW-1185">Reference proteome</keyword>
<sequence>MEFHCKELDFSLKKVESDEKVKRKPGRPRKHNVRPVVKDVPIGNDFDKATITTKTFTIKVENFDPDIDIWRNQISVSNVQHNDLECRCKDKIFPYTKPHKPGDIVEEYVFSKKNTKNIEKKENVFKNCFTVVILDQSLKPTTIKICKKGSFQLTGCLSMESGEFCVLSLITNLQKKNPQWIPSLIDMTIKPVMTNVKFTIGYKISIVKALNFFENRKDIHEFFSYKLRVNPAINIKELLTEKDLENVPVRIVTYVNVNNKIYNRTSQEITLLNHIQTLSLKEKQKHFKEKHTTLLLFRSGSVILSGIHENVMKKTFESFQKVTSDYKSYLT</sequence>
<gene>
    <name type="ORF">IIV6-335L</name>
</gene>
<protein>
    <recommendedName>
        <fullName>Uncharacterized protein 335L</fullName>
    </recommendedName>
</protein>
<proteinExistence type="inferred from homology"/>
<comment type="similarity">
    <text evidence="1">Belongs to the IIV-6 335L family.</text>
</comment>
<organism>
    <name type="scientific">Invertebrate iridescent virus 6</name>
    <name type="common">IIV-6</name>
    <name type="synonym">Chilo iridescent virus</name>
    <dbReference type="NCBI Taxonomy" id="176652"/>
    <lineage>
        <taxon>Viruses</taxon>
        <taxon>Varidnaviria</taxon>
        <taxon>Bamfordvirae</taxon>
        <taxon>Nucleocytoviricota</taxon>
        <taxon>Megaviricetes</taxon>
        <taxon>Pimascovirales</taxon>
        <taxon>Iridoviridae</taxon>
        <taxon>Betairidovirinae</taxon>
        <taxon>Iridovirus</taxon>
    </lineage>
</organism>
<feature type="chain" id="PRO_0000377861" description="Uncharacterized protein 335L">
    <location>
        <begin position="1"/>
        <end position="331"/>
    </location>
</feature>
<reference key="1">
    <citation type="journal article" date="2001" name="Virology">
        <title>Analysis of the first complete DNA sequence of an invertebrate iridovirus: coding strategy of the genome of Chilo iridescent virus.</title>
        <authorList>
            <person name="Jakob N.J."/>
            <person name="Mueller K."/>
            <person name="Bahr U."/>
            <person name="Darai G."/>
        </authorList>
    </citation>
    <scope>NUCLEOTIDE SEQUENCE [LARGE SCALE GENOMIC DNA]</scope>
</reference>
<reference key="2">
    <citation type="journal article" date="2007" name="Virol. J.">
        <title>Comparative genomic analysis of the family Iridoviridae: re-annotating and defining the core set of iridovirus genes.</title>
        <authorList>
            <person name="Eaton H.E."/>
            <person name="Metcalf J."/>
            <person name="Penny E."/>
            <person name="Tcherepanov V."/>
            <person name="Upton C."/>
            <person name="Brunetti C.R."/>
        </authorList>
    </citation>
    <scope>GENOME REANNOTATION</scope>
</reference>
<dbReference type="EMBL" id="AF303741">
    <property type="protein sequence ID" value="AAK82196.1"/>
    <property type="molecule type" value="Genomic_DNA"/>
</dbReference>
<dbReference type="RefSeq" id="NP_149798.1">
    <property type="nucleotide sequence ID" value="NC_003038.1"/>
</dbReference>
<dbReference type="KEGG" id="vg:1733116"/>
<dbReference type="OrthoDB" id="32044at10239"/>
<dbReference type="Proteomes" id="UP000001359">
    <property type="component" value="Genome"/>
</dbReference>
<organismHost>
    <name type="scientific">Acheta domesticus</name>
    <name type="common">House cricket</name>
    <dbReference type="NCBI Taxonomy" id="6997"/>
</organismHost>
<organismHost>
    <name type="scientific">Chilo suppressalis</name>
    <name type="common">Asiatic rice borer moth</name>
    <dbReference type="NCBI Taxonomy" id="168631"/>
</organismHost>
<organismHost>
    <name type="scientific">Gryllus bimaculatus</name>
    <name type="common">Two-spotted cricket</name>
    <dbReference type="NCBI Taxonomy" id="6999"/>
</organismHost>
<organismHost>
    <name type="scientific">Gryllus campestris</name>
    <dbReference type="NCBI Taxonomy" id="58607"/>
</organismHost>
<organismHost>
    <name type="scientific">Spodoptera frugiperda</name>
    <name type="common">Fall armyworm</name>
    <dbReference type="NCBI Taxonomy" id="7108"/>
</organismHost>
<evidence type="ECO:0000305" key="1"/>
<accession>Q91FI9</accession>